<proteinExistence type="evidence at transcript level"/>
<organism>
    <name type="scientific">Mus musculus</name>
    <name type="common">Mouse</name>
    <dbReference type="NCBI Taxonomy" id="10090"/>
    <lineage>
        <taxon>Eukaryota</taxon>
        <taxon>Metazoa</taxon>
        <taxon>Chordata</taxon>
        <taxon>Craniata</taxon>
        <taxon>Vertebrata</taxon>
        <taxon>Euteleostomi</taxon>
        <taxon>Mammalia</taxon>
        <taxon>Eutheria</taxon>
        <taxon>Euarchontoglires</taxon>
        <taxon>Glires</taxon>
        <taxon>Rodentia</taxon>
        <taxon>Myomorpha</taxon>
        <taxon>Muroidea</taxon>
        <taxon>Muridae</taxon>
        <taxon>Murinae</taxon>
        <taxon>Mus</taxon>
        <taxon>Mus</taxon>
    </lineage>
</organism>
<keyword id="KW-0137">Centromere</keyword>
<keyword id="KW-0156">Chromatin regulator</keyword>
<keyword id="KW-0158">Chromosome</keyword>
<keyword id="KW-0963">Cytoplasm</keyword>
<keyword id="KW-0206">Cytoskeleton</keyword>
<keyword id="KW-0235">DNA replication</keyword>
<keyword id="KW-0995">Kinetochore</keyword>
<keyword id="KW-0433">Leucine-rich repeat</keyword>
<keyword id="KW-0539">Nucleus</keyword>
<keyword id="KW-0597">Phosphoprotein</keyword>
<keyword id="KW-1185">Reference proteome</keyword>
<keyword id="KW-0677">Repeat</keyword>
<keyword id="KW-0779">Telomere</keyword>
<keyword id="KW-0832">Ubl conjugation</keyword>
<keyword id="KW-0853">WD repeat</keyword>
<dbReference type="EMBL" id="AK004717">
    <property type="protein sequence ID" value="BAB23500.1"/>
    <property type="status" value="ALT_SEQ"/>
    <property type="molecule type" value="mRNA"/>
</dbReference>
<dbReference type="EMBL" id="AK051910">
    <property type="protein sequence ID" value="BAC34810.1"/>
    <property type="status" value="ALT_SEQ"/>
    <property type="molecule type" value="mRNA"/>
</dbReference>
<dbReference type="EMBL" id="AK084948">
    <property type="protein sequence ID" value="BAC39318.1"/>
    <property type="molecule type" value="mRNA"/>
</dbReference>
<dbReference type="EMBL" id="AK153976">
    <property type="protein sequence ID" value="BAE32292.1"/>
    <property type="molecule type" value="mRNA"/>
</dbReference>
<dbReference type="EMBL" id="AK167020">
    <property type="protein sequence ID" value="BAE39194.1"/>
    <property type="molecule type" value="mRNA"/>
</dbReference>
<dbReference type="EMBL" id="AK167868">
    <property type="protein sequence ID" value="BAE39884.1"/>
    <property type="molecule type" value="mRNA"/>
</dbReference>
<dbReference type="EMBL" id="AC087420">
    <property type="status" value="NOT_ANNOTATED_CDS"/>
    <property type="molecule type" value="Genomic_DNA"/>
</dbReference>
<dbReference type="EMBL" id="BC048397">
    <property type="protein sequence ID" value="AAH48397.1"/>
    <property type="molecule type" value="mRNA"/>
</dbReference>
<dbReference type="CCDS" id="CCDS51666.1"/>
<dbReference type="RefSeq" id="NP_082167.2">
    <property type="nucleotide sequence ID" value="NM_027891.4"/>
</dbReference>
<dbReference type="SMR" id="Q8BUI3"/>
<dbReference type="BioGRID" id="214889">
    <property type="interactions" value="3"/>
</dbReference>
<dbReference type="FunCoup" id="Q8BUI3">
    <property type="interactions" value="2140"/>
</dbReference>
<dbReference type="STRING" id="10090.ENSMUSP00000006301"/>
<dbReference type="iPTMnet" id="Q8BUI3"/>
<dbReference type="PhosphoSitePlus" id="Q8BUI3"/>
<dbReference type="SwissPalm" id="Q8BUI3"/>
<dbReference type="PaxDb" id="10090-ENSMUSP00000006301"/>
<dbReference type="PeptideAtlas" id="Q8BUI3"/>
<dbReference type="ProteomicsDB" id="292375"/>
<dbReference type="Pumba" id="Q8BUI3"/>
<dbReference type="Antibodypedia" id="16796">
    <property type="antibodies" value="108 antibodies from 22 providers"/>
</dbReference>
<dbReference type="DNASU" id="71735"/>
<dbReference type="Ensembl" id="ENSMUST00000006301.11">
    <property type="protein sequence ID" value="ENSMUSP00000006301.5"/>
    <property type="gene ID" value="ENSMUSG00000029703.11"/>
</dbReference>
<dbReference type="GeneID" id="71735"/>
<dbReference type="KEGG" id="mmu:71735"/>
<dbReference type="UCSC" id="uc008zzx.2">
    <property type="organism name" value="mouse"/>
</dbReference>
<dbReference type="AGR" id="MGI:1918985"/>
<dbReference type="CTD" id="222229"/>
<dbReference type="MGI" id="MGI:1918985">
    <property type="gene designation" value="Lrwd1"/>
</dbReference>
<dbReference type="VEuPathDB" id="HostDB:ENSMUSG00000029703"/>
<dbReference type="eggNOG" id="KOG0619">
    <property type="taxonomic scope" value="Eukaryota"/>
</dbReference>
<dbReference type="GeneTree" id="ENSGT00940000154248"/>
<dbReference type="HOGENOM" id="CLU_022994_0_0_1"/>
<dbReference type="InParanoid" id="Q8BUI3"/>
<dbReference type="OMA" id="TCPDKGI"/>
<dbReference type="OrthoDB" id="7318948at2759"/>
<dbReference type="PhylomeDB" id="Q8BUI3"/>
<dbReference type="TreeFam" id="TF329554"/>
<dbReference type="BioGRID-ORCS" id="71735">
    <property type="hits" value="2 hits in 80 CRISPR screens"/>
</dbReference>
<dbReference type="ChiTaRS" id="Lrwd1">
    <property type="organism name" value="mouse"/>
</dbReference>
<dbReference type="PRO" id="PR:Q8BUI3"/>
<dbReference type="Proteomes" id="UP000000589">
    <property type="component" value="Chromosome 5"/>
</dbReference>
<dbReference type="RNAct" id="Q8BUI3">
    <property type="molecule type" value="protein"/>
</dbReference>
<dbReference type="Bgee" id="ENSMUSG00000029703">
    <property type="expression patterns" value="Expressed in seminiferous tubule of testis and 260 other cell types or tissues"/>
</dbReference>
<dbReference type="ExpressionAtlas" id="Q8BUI3">
    <property type="expression patterns" value="baseline and differential"/>
</dbReference>
<dbReference type="GO" id="GO:0005813">
    <property type="term" value="C:centrosome"/>
    <property type="evidence" value="ECO:0007669"/>
    <property type="project" value="UniProtKB-SubCell"/>
</dbReference>
<dbReference type="GO" id="GO:0000781">
    <property type="term" value="C:chromosome, telomeric region"/>
    <property type="evidence" value="ECO:0000250"/>
    <property type="project" value="UniProtKB"/>
</dbReference>
<dbReference type="GO" id="GO:0005737">
    <property type="term" value="C:cytoplasm"/>
    <property type="evidence" value="ECO:0007669"/>
    <property type="project" value="UniProtKB-KW"/>
</dbReference>
<dbReference type="GO" id="GO:0000776">
    <property type="term" value="C:kinetochore"/>
    <property type="evidence" value="ECO:0000250"/>
    <property type="project" value="UniProtKB"/>
</dbReference>
<dbReference type="GO" id="GO:0005664">
    <property type="term" value="C:nuclear origin of replication recognition complex"/>
    <property type="evidence" value="ECO:0000250"/>
    <property type="project" value="UniProtKB"/>
</dbReference>
<dbReference type="GO" id="GO:0005730">
    <property type="term" value="C:nucleolus"/>
    <property type="evidence" value="ECO:0007669"/>
    <property type="project" value="Ensembl"/>
</dbReference>
<dbReference type="GO" id="GO:0005654">
    <property type="term" value="C:nucleoplasm"/>
    <property type="evidence" value="ECO:0007669"/>
    <property type="project" value="Ensembl"/>
</dbReference>
<dbReference type="GO" id="GO:0005634">
    <property type="term" value="C:nucleus"/>
    <property type="evidence" value="ECO:0000250"/>
    <property type="project" value="UniProtKB"/>
</dbReference>
<dbReference type="GO" id="GO:0005721">
    <property type="term" value="C:pericentric heterochromatin"/>
    <property type="evidence" value="ECO:0000250"/>
    <property type="project" value="UniProtKB"/>
</dbReference>
<dbReference type="GO" id="GO:0003682">
    <property type="term" value="F:chromatin binding"/>
    <property type="evidence" value="ECO:0000250"/>
    <property type="project" value="UniProtKB"/>
</dbReference>
<dbReference type="GO" id="GO:0061628">
    <property type="term" value="F:histone H3K27me3 reader activity"/>
    <property type="evidence" value="ECO:0000250"/>
    <property type="project" value="UniProtKB"/>
</dbReference>
<dbReference type="GO" id="GO:0008327">
    <property type="term" value="F:methyl-CpG binding"/>
    <property type="evidence" value="ECO:0000250"/>
    <property type="project" value="UniProtKB"/>
</dbReference>
<dbReference type="GO" id="GO:0006325">
    <property type="term" value="P:chromatin organization"/>
    <property type="evidence" value="ECO:0000250"/>
    <property type="project" value="UniProtKB"/>
</dbReference>
<dbReference type="GO" id="GO:0006260">
    <property type="term" value="P:DNA replication"/>
    <property type="evidence" value="ECO:0007669"/>
    <property type="project" value="UniProtKB-KW"/>
</dbReference>
<dbReference type="GO" id="GO:0071169">
    <property type="term" value="P:establishment of protein localization to chromatin"/>
    <property type="evidence" value="ECO:0000250"/>
    <property type="project" value="UniProtKB"/>
</dbReference>
<dbReference type="FunFam" id="2.130.10.10:FF:000488">
    <property type="entry name" value="Leucine-rich repeat and WD repeat-containing protein 1"/>
    <property type="match status" value="1"/>
</dbReference>
<dbReference type="FunFam" id="3.80.10.10:FF:000429">
    <property type="entry name" value="Leucine-rich repeat and WD repeat-containing protein 1"/>
    <property type="match status" value="1"/>
</dbReference>
<dbReference type="Gene3D" id="3.80.10.10">
    <property type="entry name" value="Ribonuclease Inhibitor"/>
    <property type="match status" value="1"/>
</dbReference>
<dbReference type="Gene3D" id="2.130.10.10">
    <property type="entry name" value="YVTN repeat-like/Quinoprotein amine dehydrogenase"/>
    <property type="match status" value="1"/>
</dbReference>
<dbReference type="InterPro" id="IPR001611">
    <property type="entry name" value="Leu-rich_rpt"/>
</dbReference>
<dbReference type="InterPro" id="IPR003591">
    <property type="entry name" value="Leu-rich_rpt_typical-subtyp"/>
</dbReference>
<dbReference type="InterPro" id="IPR032675">
    <property type="entry name" value="LRR_dom_sf"/>
</dbReference>
<dbReference type="InterPro" id="IPR056363">
    <property type="entry name" value="LRR_LRWD1_dom"/>
</dbReference>
<dbReference type="InterPro" id="IPR052489">
    <property type="entry name" value="LRWD1"/>
</dbReference>
<dbReference type="InterPro" id="IPR015943">
    <property type="entry name" value="WD40/YVTN_repeat-like_dom_sf"/>
</dbReference>
<dbReference type="InterPro" id="IPR019775">
    <property type="entry name" value="WD40_repeat_CS"/>
</dbReference>
<dbReference type="InterPro" id="IPR036322">
    <property type="entry name" value="WD40_repeat_dom_sf"/>
</dbReference>
<dbReference type="InterPro" id="IPR001680">
    <property type="entry name" value="WD40_rpt"/>
</dbReference>
<dbReference type="InterPro" id="IPR056160">
    <property type="entry name" value="WD_LRWD1"/>
</dbReference>
<dbReference type="PANTHER" id="PTHR24370:SF10">
    <property type="entry name" value="LEUCINE-RICH REPEAT AND WD REPEAT-CONTAINING PROTEIN 1"/>
    <property type="match status" value="1"/>
</dbReference>
<dbReference type="PANTHER" id="PTHR24370">
    <property type="entry name" value="OPTICIN"/>
    <property type="match status" value="1"/>
</dbReference>
<dbReference type="Pfam" id="PF23211">
    <property type="entry name" value="LRR_LRWD1"/>
    <property type="match status" value="1"/>
</dbReference>
<dbReference type="Pfam" id="PF23215">
    <property type="entry name" value="WD_LRWD1"/>
    <property type="match status" value="1"/>
</dbReference>
<dbReference type="SMART" id="SM00369">
    <property type="entry name" value="LRR_TYP"/>
    <property type="match status" value="2"/>
</dbReference>
<dbReference type="SMART" id="SM00320">
    <property type="entry name" value="WD40"/>
    <property type="match status" value="4"/>
</dbReference>
<dbReference type="SUPFAM" id="SSF52075">
    <property type="entry name" value="Outer arm dynein light chain 1"/>
    <property type="match status" value="1"/>
</dbReference>
<dbReference type="SUPFAM" id="SSF50978">
    <property type="entry name" value="WD40 repeat-like"/>
    <property type="match status" value="1"/>
</dbReference>
<dbReference type="PROSITE" id="PS51450">
    <property type="entry name" value="LRR"/>
    <property type="match status" value="3"/>
</dbReference>
<dbReference type="PROSITE" id="PS00678">
    <property type="entry name" value="WD_REPEATS_1"/>
    <property type="match status" value="1"/>
</dbReference>
<dbReference type="PROSITE" id="PS50082">
    <property type="entry name" value="WD_REPEATS_2"/>
    <property type="match status" value="1"/>
</dbReference>
<dbReference type="PROSITE" id="PS50294">
    <property type="entry name" value="WD_REPEATS_REGION"/>
    <property type="match status" value="1"/>
</dbReference>
<accession>Q8BUI3</accession>
<accession>D3Z2P9</accession>
<accession>Q3TIG2</accession>
<accession>Q8BKI3</accession>
<accession>Q9DBW4</accession>
<gene>
    <name type="primary">LRWD1</name>
    <name type="synonym">Orca</name>
</gene>
<comment type="function">
    <text evidence="1 6">Required for G1/S transition. Recruits and stabilizes the origin recognition complex (ORC) onto chromatin during G1 to establish pre-replication complex (preRC) and to heterochromatic sites in post-replicated cells. Binds a combination of DNA and histone methylation repressive marks on heterochromatin. Binds histone H3 and H4 trimethylation marks H3K9me3, H3K27me3 and H4K20me3 in a cooperative manner with DNA methylation (By similarity). Required for silencing of major satellite repeats. May be important ORC2, ORC3 and ORC4 stability.</text>
</comment>
<comment type="subunit">
    <text evidence="1">Integral component of the ORC complex (By similarity). Directly interacts with CDT1, GMNN and ORC2. Interacts with ORC2 only when non-ubiquitinated; this interaction prevents LRWD1 ubiquitination and degradation. Some of these interactions are regulated in a cell-cycle dependent manner. Interaction with ORC1 occurs predominantly during G1. Association with phosphorylated ORC1 during mitosis is not efficient. Interaction with CDT1 occurs during G1 phase, as well as during mitosis with phosphorylated CDT1. Interaction with GMNN occurs from G1/S to mitosis. Interaction with ORC2 is observed throughout the cell cycle. The stoichiometry of the ORCA/ORC/CDT1/GMNN complex is 1:1:1:2 (By similarity). Interacts with CUL4A and DDB1; this interaction may lead to ubiquitination (By similarity).</text>
</comment>
<comment type="subcellular location">
    <subcellularLocation>
        <location evidence="2">Nucleus</location>
    </subcellularLocation>
    <subcellularLocation>
        <location evidence="2">Chromosome</location>
        <location evidence="2">Centromere</location>
    </subcellularLocation>
    <subcellularLocation>
        <location evidence="2">Chromosome</location>
        <location evidence="2">Telomere</location>
    </subcellularLocation>
    <subcellularLocation>
        <location evidence="5">Cytoplasm</location>
        <location evidence="5">Cytoskeleton</location>
        <location evidence="5">Microtubule organizing center</location>
        <location evidence="5">Centrosome</location>
    </subcellularLocation>
    <subcellularLocation>
        <location evidence="2">Chromosome</location>
        <location evidence="2">Centromere</location>
        <location evidence="2">Kinetochore</location>
    </subcellularLocation>
    <text evidence="2">Localizes to heterochromatin during G1 phase. Restricted to centromeres or telomeres as cells progress though S phase. When cells enter mitosis, relocalizes to centromeres. Recruitment to pericentric heterochromatin largely depends on the presence of H3K9me3.</text>
</comment>
<comment type="tissue specificity">
    <text evidence="4">Testis-specific.</text>
</comment>
<comment type="domain">
    <text evidence="1">The entire WD repeat region is required for the interaction with ORC, CDT1 and GMNN, as well as for association with chromatin and for binding to histone H3 and H4 trimethylation marks H3K9me3 and H4K20me3 (By similarity). Centrosomal localization requires additional conformation.</text>
</comment>
<comment type="PTM">
    <text evidence="1">Ubiquitinated; undergoes 'Lys-48'-linked polyubiquitination leading to proteasomal degradation. Ubiquitination occurs within the WD repeats at the end of the G1 phase. Ubiquitination may be catalyzed by the CUL4-DDB1 E3 ubiquitin-protein ligase complex and other E3 ligases (By similarity).</text>
</comment>
<comment type="similarity">
    <text evidence="7">Belongs to the LRWD1 family.</text>
</comment>
<comment type="caution">
    <text evidence="8">Reported to be testis-specific (PubMed:20180869). However the transcript is found in many tissues, suggesting that the protein is present in many tissues.</text>
</comment>
<comment type="sequence caution" evidence="7">
    <conflict type="miscellaneous discrepancy">
        <sequence resource="EMBL-CDS" id="BAB23500"/>
    </conflict>
    <text>Probable cloning artifact.</text>
</comment>
<comment type="sequence caution" evidence="7">
    <conflict type="miscellaneous discrepancy">
        <sequence resource="EMBL-CDS" id="BAC34810"/>
    </conflict>
    <text>Probable cloning artifact.</text>
</comment>
<feature type="chain" id="PRO_0000310995" description="Leucine-rich repeat and WD repeat-containing protein 1">
    <location>
        <begin position="1"/>
        <end position="648"/>
    </location>
</feature>
<feature type="repeat" description="LRR 1">
    <location>
        <begin position="22"/>
        <end position="43"/>
    </location>
</feature>
<feature type="repeat" description="LRR 2">
    <location>
        <begin position="48"/>
        <end position="69"/>
    </location>
</feature>
<feature type="repeat" description="LRR 3">
    <location>
        <begin position="70"/>
        <end position="91"/>
    </location>
</feature>
<feature type="repeat" description="LRR 4">
    <location>
        <begin position="92"/>
        <end position="113"/>
    </location>
</feature>
<feature type="repeat" description="WD 1">
    <location>
        <begin position="392"/>
        <end position="432"/>
    </location>
</feature>
<feature type="repeat" description="WD 2">
    <location>
        <begin position="443"/>
        <end position="482"/>
    </location>
</feature>
<feature type="repeat" description="WD 3">
    <location>
        <begin position="497"/>
        <end position="536"/>
    </location>
</feature>
<feature type="repeat" description="WD 4">
    <location>
        <begin position="541"/>
        <end position="592"/>
    </location>
</feature>
<feature type="repeat" description="WD 5">
    <location>
        <begin position="616"/>
        <end position="648"/>
    </location>
</feature>
<feature type="region of interest" description="Disordered" evidence="3">
    <location>
        <begin position="214"/>
        <end position="262"/>
    </location>
</feature>
<feature type="compositionally biased region" description="Basic and acidic residues" evidence="3">
    <location>
        <begin position="226"/>
        <end position="237"/>
    </location>
</feature>
<feature type="modified residue" description="Phosphoserine" evidence="2">
    <location>
        <position position="259"/>
    </location>
</feature>
<reference key="1">
    <citation type="journal article" date="2005" name="Science">
        <title>The transcriptional landscape of the mammalian genome.</title>
        <authorList>
            <person name="Carninci P."/>
            <person name="Kasukawa T."/>
            <person name="Katayama S."/>
            <person name="Gough J."/>
            <person name="Frith M.C."/>
            <person name="Maeda N."/>
            <person name="Oyama R."/>
            <person name="Ravasi T."/>
            <person name="Lenhard B."/>
            <person name="Wells C."/>
            <person name="Kodzius R."/>
            <person name="Shimokawa K."/>
            <person name="Bajic V.B."/>
            <person name="Brenner S.E."/>
            <person name="Batalov S."/>
            <person name="Forrest A.R."/>
            <person name="Zavolan M."/>
            <person name="Davis M.J."/>
            <person name="Wilming L.G."/>
            <person name="Aidinis V."/>
            <person name="Allen J.E."/>
            <person name="Ambesi-Impiombato A."/>
            <person name="Apweiler R."/>
            <person name="Aturaliya R.N."/>
            <person name="Bailey T.L."/>
            <person name="Bansal M."/>
            <person name="Baxter L."/>
            <person name="Beisel K.W."/>
            <person name="Bersano T."/>
            <person name="Bono H."/>
            <person name="Chalk A.M."/>
            <person name="Chiu K.P."/>
            <person name="Choudhary V."/>
            <person name="Christoffels A."/>
            <person name="Clutterbuck D.R."/>
            <person name="Crowe M.L."/>
            <person name="Dalla E."/>
            <person name="Dalrymple B.P."/>
            <person name="de Bono B."/>
            <person name="Della Gatta G."/>
            <person name="di Bernardo D."/>
            <person name="Down T."/>
            <person name="Engstrom P."/>
            <person name="Fagiolini M."/>
            <person name="Faulkner G."/>
            <person name="Fletcher C.F."/>
            <person name="Fukushima T."/>
            <person name="Furuno M."/>
            <person name="Futaki S."/>
            <person name="Gariboldi M."/>
            <person name="Georgii-Hemming P."/>
            <person name="Gingeras T.R."/>
            <person name="Gojobori T."/>
            <person name="Green R.E."/>
            <person name="Gustincich S."/>
            <person name="Harbers M."/>
            <person name="Hayashi Y."/>
            <person name="Hensch T.K."/>
            <person name="Hirokawa N."/>
            <person name="Hill D."/>
            <person name="Huminiecki L."/>
            <person name="Iacono M."/>
            <person name="Ikeo K."/>
            <person name="Iwama A."/>
            <person name="Ishikawa T."/>
            <person name="Jakt M."/>
            <person name="Kanapin A."/>
            <person name="Katoh M."/>
            <person name="Kawasawa Y."/>
            <person name="Kelso J."/>
            <person name="Kitamura H."/>
            <person name="Kitano H."/>
            <person name="Kollias G."/>
            <person name="Krishnan S.P."/>
            <person name="Kruger A."/>
            <person name="Kummerfeld S.K."/>
            <person name="Kurochkin I.V."/>
            <person name="Lareau L.F."/>
            <person name="Lazarevic D."/>
            <person name="Lipovich L."/>
            <person name="Liu J."/>
            <person name="Liuni S."/>
            <person name="McWilliam S."/>
            <person name="Madan Babu M."/>
            <person name="Madera M."/>
            <person name="Marchionni L."/>
            <person name="Matsuda H."/>
            <person name="Matsuzawa S."/>
            <person name="Miki H."/>
            <person name="Mignone F."/>
            <person name="Miyake S."/>
            <person name="Morris K."/>
            <person name="Mottagui-Tabar S."/>
            <person name="Mulder N."/>
            <person name="Nakano N."/>
            <person name="Nakauchi H."/>
            <person name="Ng P."/>
            <person name="Nilsson R."/>
            <person name="Nishiguchi S."/>
            <person name="Nishikawa S."/>
            <person name="Nori F."/>
            <person name="Ohara O."/>
            <person name="Okazaki Y."/>
            <person name="Orlando V."/>
            <person name="Pang K.C."/>
            <person name="Pavan W.J."/>
            <person name="Pavesi G."/>
            <person name="Pesole G."/>
            <person name="Petrovsky N."/>
            <person name="Piazza S."/>
            <person name="Reed J."/>
            <person name="Reid J.F."/>
            <person name="Ring B.Z."/>
            <person name="Ringwald M."/>
            <person name="Rost B."/>
            <person name="Ruan Y."/>
            <person name="Salzberg S.L."/>
            <person name="Sandelin A."/>
            <person name="Schneider C."/>
            <person name="Schoenbach C."/>
            <person name="Sekiguchi K."/>
            <person name="Semple C.A."/>
            <person name="Seno S."/>
            <person name="Sessa L."/>
            <person name="Sheng Y."/>
            <person name="Shibata Y."/>
            <person name="Shimada H."/>
            <person name="Shimada K."/>
            <person name="Silva D."/>
            <person name="Sinclair B."/>
            <person name="Sperling S."/>
            <person name="Stupka E."/>
            <person name="Sugiura K."/>
            <person name="Sultana R."/>
            <person name="Takenaka Y."/>
            <person name="Taki K."/>
            <person name="Tammoja K."/>
            <person name="Tan S.L."/>
            <person name="Tang S."/>
            <person name="Taylor M.S."/>
            <person name="Tegner J."/>
            <person name="Teichmann S.A."/>
            <person name="Ueda H.R."/>
            <person name="van Nimwegen E."/>
            <person name="Verardo R."/>
            <person name="Wei C.L."/>
            <person name="Yagi K."/>
            <person name="Yamanishi H."/>
            <person name="Zabarovsky E."/>
            <person name="Zhu S."/>
            <person name="Zimmer A."/>
            <person name="Hide W."/>
            <person name="Bult C."/>
            <person name="Grimmond S.M."/>
            <person name="Teasdale R.D."/>
            <person name="Liu E.T."/>
            <person name="Brusic V."/>
            <person name="Quackenbush J."/>
            <person name="Wahlestedt C."/>
            <person name="Mattick J.S."/>
            <person name="Hume D.A."/>
            <person name="Kai C."/>
            <person name="Sasaki D."/>
            <person name="Tomaru Y."/>
            <person name="Fukuda S."/>
            <person name="Kanamori-Katayama M."/>
            <person name="Suzuki M."/>
            <person name="Aoki J."/>
            <person name="Arakawa T."/>
            <person name="Iida J."/>
            <person name="Imamura K."/>
            <person name="Itoh M."/>
            <person name="Kato T."/>
            <person name="Kawaji H."/>
            <person name="Kawagashira N."/>
            <person name="Kawashima T."/>
            <person name="Kojima M."/>
            <person name="Kondo S."/>
            <person name="Konno H."/>
            <person name="Nakano K."/>
            <person name="Ninomiya N."/>
            <person name="Nishio T."/>
            <person name="Okada M."/>
            <person name="Plessy C."/>
            <person name="Shibata K."/>
            <person name="Shiraki T."/>
            <person name="Suzuki S."/>
            <person name="Tagami M."/>
            <person name="Waki K."/>
            <person name="Watahiki A."/>
            <person name="Okamura-Oho Y."/>
            <person name="Suzuki H."/>
            <person name="Kawai J."/>
            <person name="Hayashizaki Y."/>
        </authorList>
    </citation>
    <scope>NUCLEOTIDE SEQUENCE [LARGE SCALE MRNA]</scope>
    <source>
        <strain>BALB/cJ</strain>
        <strain>C57BL/6J</strain>
        <strain>NOD</strain>
        <tissue>Eye</tissue>
        <tissue>Lung</tissue>
        <tissue>Thymus</tissue>
    </source>
</reference>
<reference key="2">
    <citation type="journal article" date="2009" name="PLoS Biol.">
        <title>Lineage-specific biology revealed by a finished genome assembly of the mouse.</title>
        <authorList>
            <person name="Church D.M."/>
            <person name="Goodstadt L."/>
            <person name="Hillier L.W."/>
            <person name="Zody M.C."/>
            <person name="Goldstein S."/>
            <person name="She X."/>
            <person name="Bult C.J."/>
            <person name="Agarwala R."/>
            <person name="Cherry J.L."/>
            <person name="DiCuccio M."/>
            <person name="Hlavina W."/>
            <person name="Kapustin Y."/>
            <person name="Meric P."/>
            <person name="Maglott D."/>
            <person name="Birtle Z."/>
            <person name="Marques A.C."/>
            <person name="Graves T."/>
            <person name="Zhou S."/>
            <person name="Teague B."/>
            <person name="Potamousis K."/>
            <person name="Churas C."/>
            <person name="Place M."/>
            <person name="Herschleb J."/>
            <person name="Runnheim R."/>
            <person name="Forrest D."/>
            <person name="Amos-Landgraf J."/>
            <person name="Schwartz D.C."/>
            <person name="Cheng Z."/>
            <person name="Lindblad-Toh K."/>
            <person name="Eichler E.E."/>
            <person name="Ponting C.P."/>
        </authorList>
    </citation>
    <scope>NUCLEOTIDE SEQUENCE [LARGE SCALE GENOMIC DNA]</scope>
    <source>
        <strain>C57BL/6J</strain>
    </source>
</reference>
<reference key="3">
    <citation type="journal article" date="2004" name="Genome Res.">
        <title>The status, quality, and expansion of the NIH full-length cDNA project: the Mammalian Gene Collection (MGC).</title>
        <authorList>
            <consortium name="The MGC Project Team"/>
        </authorList>
    </citation>
    <scope>NUCLEOTIDE SEQUENCE [LARGE SCALE MRNA]</scope>
    <source>
        <strain>FVB/N</strain>
        <tissue>Colon</tissue>
    </source>
</reference>
<reference key="4">
    <citation type="journal article" date="2006" name="Fertil. Steril.">
        <title>Identification of ten novel genes involved in human spermatogenesis by microarray analysis of testicular tissue.</title>
        <authorList>
            <person name="Lin Y.H."/>
            <person name="Lin Y.M."/>
            <person name="Teng Y.N."/>
            <person name="Hsieh T.Y."/>
            <person name="Lin Y.S."/>
            <person name="Kuo P.L."/>
        </authorList>
    </citation>
    <scope>TISSUE SPECIFICITY</scope>
</reference>
<reference key="5">
    <citation type="journal article" date="2010" name="Int. J. Androl.">
        <title>Expression of lrwd1 in mouse testis and its centrosomal localization.</title>
        <authorList>
            <person name="Teng Y.N."/>
            <person name="Liao M.H."/>
            <person name="Lin Y.B."/>
            <person name="Kuo P.L."/>
            <person name="Kuo T.Y."/>
        </authorList>
    </citation>
    <scope>SUBCELLULAR LOCATION</scope>
</reference>
<reference key="6">
    <citation type="journal article" date="2012" name="J. Biol. Chem.">
        <title>Leucine-rich repeat and WD repeat-containing protein 1 is recruited to pericentric heterochromatin by trimethylated lysine 9 of histone H3 and maintains heterochromatin silencing.</title>
        <authorList>
            <person name="Chan K.M."/>
            <person name="Zhang Z."/>
        </authorList>
    </citation>
    <scope>FUNCTION</scope>
</reference>
<sequence length="648" mass="71594">MAPLTPQLLLQRGRPKTDKLGKIQSLNLSGLQLLSEHLDPNLLGRLKKLRELDLSNNLLETLPANLGLSHLRILRCTNNQLGDVTALHQFPELEELNLEGNPFLTVSDNLKVSFLLPKLRKVNGKDTASTCSQVENLDRELMDRVTAHWQKFIATVSPEEETDKVRADFMRSAVRDVCYGPESLIEFTQWRVRMIAEELVASGGAQVQDAKVPVEHPQAAGASKFRAREVASKRPGKDPVTLPPSKRVRALPPAQAEGSPMGADGGQAALHLEPLHFLQCHSRNNSPKDLETQLWACAFEPAREEGHSRATSQTVATCGGEAVCVIDCQTGLVLHKYKVPGEEFFSVAWTALTVVTQAGHKKRWNMLAAAGLRGMVRLLHVRAGFCCSVIRAHKKAIATLCFSPSHETHLFTASYDKRIILWDIGVPNQDYKFQASQLLTLNCGSVPLRLCPVATCPDDFLLAGCEGGCYCWDVRLDQPQKQRVCEVNFIFSEDSKVSGQRVDGLAFVNEDVVASKGSGQGTIYLWSWSQTWAGRGRQSVLPVVILVRLQWSPTNLAYFSLSTCPGKNLVLCGDEEGSVWIYDVEHLLKEPPQATTLQPPTQILKWPQPTALGQPVTKTMINTVVANAAFTYLTALTDSNIVSIWRRC</sequence>
<protein>
    <recommendedName>
        <fullName>Leucine-rich repeat and WD repeat-containing protein 1</fullName>
    </recommendedName>
    <alternativeName>
        <fullName>ORC-associated protein</fullName>
        <shortName>ORCA</shortName>
    </alternativeName>
    <alternativeName>
        <fullName>Origin recognition complex-associated protein</fullName>
    </alternativeName>
</protein>
<name>LRWD1_MOUSE</name>
<evidence type="ECO:0000250" key="1"/>
<evidence type="ECO:0000250" key="2">
    <source>
        <dbReference type="UniProtKB" id="Q9UFC0"/>
    </source>
</evidence>
<evidence type="ECO:0000256" key="3">
    <source>
        <dbReference type="SAM" id="MobiDB-lite"/>
    </source>
</evidence>
<evidence type="ECO:0000269" key="4">
    <source>
    </source>
</evidence>
<evidence type="ECO:0000269" key="5">
    <source>
    </source>
</evidence>
<evidence type="ECO:0000269" key="6">
    <source>
    </source>
</evidence>
<evidence type="ECO:0000305" key="7"/>
<evidence type="ECO:0000305" key="8">
    <source>
    </source>
</evidence>